<keyword id="KW-0167">Capsid protein</keyword>
<keyword id="KW-0903">Direct protein sequencing</keyword>
<keyword id="KW-1185">Reference proteome</keyword>
<keyword id="KW-0946">Virion</keyword>
<protein>
    <recommendedName>
        <fullName evidence="2">Probable major capsid protein gp17</fullName>
    </recommendedName>
    <alternativeName>
        <fullName evidence="2">Gene product 17</fullName>
        <shortName evidence="2">gp17</shortName>
    </alternativeName>
    <alternativeName>
        <fullName evidence="2">Major head protein gp17</fullName>
    </alternativeName>
</protein>
<organismHost>
    <name type="scientific">Mycobacterium</name>
    <dbReference type="NCBI Taxonomy" id="1763"/>
</organismHost>
<proteinExistence type="evidence at protein level"/>
<evidence type="ECO:0000269" key="1">
    <source>
    </source>
</evidence>
<evidence type="ECO:0000305" key="2"/>
<dbReference type="EMBL" id="Z18946">
    <property type="protein sequence ID" value="CAA79393.1"/>
    <property type="molecule type" value="Genomic_DNA"/>
</dbReference>
<dbReference type="PIR" id="S30962">
    <property type="entry name" value="S30962"/>
</dbReference>
<dbReference type="RefSeq" id="NP_039681.1">
    <property type="nucleotide sequence ID" value="NC_001335.1"/>
</dbReference>
<dbReference type="SMR" id="Q05223"/>
<dbReference type="GeneID" id="2942929"/>
<dbReference type="KEGG" id="vg:2942929"/>
<dbReference type="OrthoDB" id="4808at10239"/>
<dbReference type="Proteomes" id="UP000002123">
    <property type="component" value="Genome"/>
</dbReference>
<dbReference type="GO" id="GO:0019028">
    <property type="term" value="C:viral capsid"/>
    <property type="evidence" value="ECO:0007669"/>
    <property type="project" value="UniProtKB-KW"/>
</dbReference>
<dbReference type="Gene3D" id="3.30.2320.10">
    <property type="entry name" value="hypothetical protein PF0899 domain"/>
    <property type="match status" value="1"/>
</dbReference>
<dbReference type="Gene3D" id="3.30.2400.10">
    <property type="entry name" value="Major capsid protein gp5"/>
    <property type="match status" value="1"/>
</dbReference>
<dbReference type="InterPro" id="IPR024455">
    <property type="entry name" value="Phage_capsid"/>
</dbReference>
<dbReference type="InterPro" id="IPR054612">
    <property type="entry name" value="Phage_capsid-like_C"/>
</dbReference>
<dbReference type="NCBIfam" id="TIGR01554">
    <property type="entry name" value="major_cap_HK97"/>
    <property type="match status" value="1"/>
</dbReference>
<dbReference type="Pfam" id="PF05065">
    <property type="entry name" value="Phage_capsid"/>
    <property type="match status" value="1"/>
</dbReference>
<dbReference type="SUPFAM" id="SSF56563">
    <property type="entry name" value="Major capsid protein gp5"/>
    <property type="match status" value="1"/>
</dbReference>
<sequence length="326" mass="35205">MAVNPDRTTPFLGVNDPKVAQTGDSMFEGYLEPEQAQDYFAEAEKISIVQQFAQKIPMGTTGQKIPHWTGDVSASWIGEGDMKPITKGNMTSQTIAPHKIATIFVASAETVRANPANYLGTMRTKVATAFAMAFDNAAINGTDSPFPTFLAQTTKEVSLVDPDGTGSNADLTVYDAVAVNALSLLVNAGKKWTHTLLDDITEPILNGAKDKSGRPLFIESTYTEENSPFRLGRIVARPTILSDHVASGTVVGYQGDFRQLVWGQVGGLSFDVTDQATLNLGTPQAPNFVSLWQHNLVAVRVEAEYAFHCNDKDAFVKLTNVDATEA</sequence>
<accession>Q05223</accession>
<gene>
    <name type="primary">17</name>
</gene>
<comment type="subunit">
    <text evidence="1">L5 head shells are composed of gp17 subunits that are extensively cross-linked.</text>
</comment>
<comment type="subcellular location">
    <subcellularLocation>
        <location evidence="2">Virion</location>
    </subcellularLocation>
</comment>
<comment type="similarity">
    <text evidence="2">Belongs to the L5likevirus major capsid protein gp17 family.</text>
</comment>
<reference key="1">
    <citation type="journal article" date="1993" name="Mol. Microbiol.">
        <title>DNA sequence, structure and gene expression of mycobacteriophage L5: a phage system for mycobacterial genetics.</title>
        <authorList>
            <person name="Hatfull G.F."/>
            <person name="Sarkis G.J."/>
        </authorList>
    </citation>
    <scope>NUCLEOTIDE SEQUENCE [GENOMIC DNA]</scope>
    <scope>PROTEIN SEQUENCE OF 2-11</scope>
</reference>
<feature type="initiator methionine" description="Removed; by host" evidence="1">
    <location>
        <position position="1"/>
    </location>
</feature>
<feature type="chain" id="PRO_0000164723" description="Probable major capsid protein gp17">
    <location>
        <begin position="2"/>
        <end position="326"/>
    </location>
</feature>
<name>CAPSD_BPML5</name>
<organism>
    <name type="scientific">Mycobacterium phage L5</name>
    <name type="common">Mycobacteriophage L5</name>
    <dbReference type="NCBI Taxonomy" id="31757"/>
    <lineage>
        <taxon>Viruses</taxon>
        <taxon>Duplodnaviria</taxon>
        <taxon>Heunggongvirae</taxon>
        <taxon>Uroviricota</taxon>
        <taxon>Caudoviricetes</taxon>
        <taxon>Fromanvirus</taxon>
    </lineage>
</organism>